<sequence length="1002" mass="113788">MPVDFLTSDQKQNYGCYAAEPNDVQLARYFHLDERDLAFINQRRGKHNRLGIALQLTTARFLGTFLTDLTQVLPGVQHFVAVQLNIHRPEVLSRYAERDTTLREHTALIKEYYGYHEFGDFPWSFRLKRLLYTRAWLSNERPGLMFDFATAWLLQNKVLLPGATTLVRLISEIRERANQRLWKKLAALPNKWQAAQVMELLVIPEGQRVSALEQLKKGPVTVSGPAFNEALERYIRLRSLEFSRLNFSGLPAIQLRNLARYAGMASVKYIARMPQQRKLAVLTAFVKAQEITALDDAVDVLDMLILDIIREAKKTGQKKRLRTLKDLDQAALLLARACALLLDDNTDVPDLRQVIFKCVPKNRLAESVSKVNELARPQNNNFHDEMVEQYGRVKRFLPAVLRDLHFRAAPAGEHVLAAIHYLAELNGSKKRILDDAPEHIITGPWKRLVYDAEGRIQRAGYSLCLLERLQDALRRRDIWLENSDRWGDPREKLLQGEEWQTQRIPVCRALGHPVDGRKGVQQLAIQLDETWKAVASRFEKNAEVHICNEGKYPSLTISCLEKQEEPPSLLRLNNRIKQLLPPVDLTELLLEIDAQTGFTHEFAHVSESGARAQDLHISLCAVLMAEACNIGLEPLIKHNIPALTRHRLSWVKQNYLRAETLVSANARLVDFQSTLELAGRWGGGEVASADGMRFVTPVKTINSGSNRKYFGSGRGITWYNFVSDQYSGFHGIVVPGTLRDSIFVLEGLLEQQTGLNPVEIMTDTAGSSDIIFGLFWLLGYQFSPRLADAGEAVFWRVNKSANYGVLDKLARGYADLSKAESQWDEMMRTAGSLKLGTIHASELIRSLLKSSRPSGLAQAIMEVGRVNKTLYLLNYIDDEDYRRRILTQLNRGEGRHAVARAICYGQRGEIRKRYREGQEDQLGALGLVTNAVVLWNTLYMEEALSWMRRNGEEIIDEDIARLSPLMHGHINMLGHYTFTLPEDILKGELRALNLNINNELSP</sequence>
<reference key="1">
    <citation type="journal article" date="1995" name="DNA Seq.">
        <title>Sequence of a transposon identified as Tn1000 (gamma delta).</title>
        <authorList>
            <person name="Broom J.E."/>
            <person name="Hill D.F."/>
            <person name="Hughes G."/>
            <person name="Jones W.A."/>
            <person name="McNaughton J.C."/>
            <person name="Stockwell P.A."/>
            <person name="Petersen G.B."/>
        </authorList>
    </citation>
    <scope>NUCLEOTIDE SEQUENCE [GENOMIC DNA]</scope>
</reference>
<reference key="2">
    <citation type="journal article" date="1994" name="Jpn. J. Genet.">
        <title>Identification of the region that determines the specificity of binding of the transposases encoded by Tn3 and gamma delta to the terminal inverted repeat sequences.</title>
        <authorList>
            <person name="Maekawa T."/>
            <person name="Ohtsubo E."/>
        </authorList>
    </citation>
    <scope>NUCLEOTIDE SEQUENCE [GENOMIC DNA]</scope>
</reference>
<reference key="3">
    <citation type="submission" date="2000-04" db="EMBL/GenBank/DDBJ databases">
        <title>Complete nucleotide sequence of the F plasmid: its implications for organization and diversification of plasmid genomes.</title>
        <authorList>
            <person name="Shimizu H."/>
            <person name="Saitoh Y."/>
            <person name="Suda Y."/>
            <person name="Uehara K."/>
            <person name="Sampei G."/>
            <person name="Mizobuchi K."/>
        </authorList>
    </citation>
    <scope>NUCLEOTIDE SEQUENCE [LARGE SCALE GENOMIC DNA]</scope>
    <source>
        <strain>K12 / CR63</strain>
        <plasmid>F</plasmid>
    </source>
</reference>
<reference key="4">
    <citation type="journal article" date="1991" name="Nucleic Acids Res.">
        <title>Transcriptional termination sequence at the end of the Escherichia coli ribosomal RNA G operon: complex terminators and antitermination.</title>
        <authorList>
            <person name="Albrechtsen B."/>
            <person name="Ross B.M."/>
            <person name="Squires C."/>
            <person name="Squires C.L."/>
        </authorList>
    </citation>
    <scope>NUCLEOTIDE SEQUENCE [GENOMIC DNA] OF 811-1002</scope>
    <source>
        <strain>K12 / HFRC</strain>
    </source>
</reference>
<accession>Q00037</accession>
<feature type="chain" id="PRO_0000075426" description="Transposase for transposon gamma-delta">
    <location>
        <begin position="1"/>
        <end position="1002"/>
    </location>
</feature>
<dbReference type="EMBL" id="X60200">
    <property type="protein sequence ID" value="CAA42760.1"/>
    <property type="molecule type" value="Genomic_DNA"/>
</dbReference>
<dbReference type="EMBL" id="D16449">
    <property type="protein sequence ID" value="BAA03914.1"/>
    <property type="molecule type" value="Genomic_DNA"/>
</dbReference>
<dbReference type="EMBL" id="X56780">
    <property type="protein sequence ID" value="CAA40100.1"/>
    <property type="molecule type" value="Genomic_DNA"/>
</dbReference>
<dbReference type="EMBL" id="AP001918">
    <property type="protein sequence ID" value="BAA97880.1"/>
    <property type="molecule type" value="Genomic_DNA"/>
</dbReference>
<dbReference type="PIR" id="I56963">
    <property type="entry name" value="I56963"/>
</dbReference>
<dbReference type="RefSeq" id="NP_061389.1">
    <property type="nucleotide sequence ID" value="NC_002483.1"/>
</dbReference>
<dbReference type="RefSeq" id="WP_001143750.1">
    <property type="nucleotide sequence ID" value="NZ_JACEFS010000062.1"/>
</dbReference>
<dbReference type="SMR" id="Q00037"/>
<dbReference type="KEGG" id="ecoc:C3026_24150"/>
<dbReference type="PATRIC" id="fig|83333.107.peg.593"/>
<dbReference type="OrthoDB" id="5292689at2"/>
<dbReference type="GO" id="GO:0003677">
    <property type="term" value="F:DNA binding"/>
    <property type="evidence" value="ECO:0007669"/>
    <property type="project" value="UniProtKB-KW"/>
</dbReference>
<dbReference type="GO" id="GO:0004803">
    <property type="term" value="F:transposase activity"/>
    <property type="evidence" value="ECO:0007669"/>
    <property type="project" value="InterPro"/>
</dbReference>
<dbReference type="GO" id="GO:0006313">
    <property type="term" value="P:DNA transposition"/>
    <property type="evidence" value="ECO:0007669"/>
    <property type="project" value="InterPro"/>
</dbReference>
<dbReference type="InterPro" id="IPR025296">
    <property type="entry name" value="DUF4158"/>
</dbReference>
<dbReference type="InterPro" id="IPR047653">
    <property type="entry name" value="Tn3-like_transpos"/>
</dbReference>
<dbReference type="InterPro" id="IPR002513">
    <property type="entry name" value="Tn3_Tnp_DDE_dom"/>
</dbReference>
<dbReference type="NCBIfam" id="NF033527">
    <property type="entry name" value="transpos_Tn3"/>
    <property type="match status" value="1"/>
</dbReference>
<dbReference type="Pfam" id="PF01526">
    <property type="entry name" value="DDE_Tnp_Tn3"/>
    <property type="match status" value="1"/>
</dbReference>
<dbReference type="Pfam" id="PF13700">
    <property type="entry name" value="DUF4158"/>
    <property type="match status" value="1"/>
</dbReference>
<name>TNPA_ECOLI</name>
<organism>
    <name type="scientific">Escherichia coli (strain K12)</name>
    <dbReference type="NCBI Taxonomy" id="83333"/>
    <lineage>
        <taxon>Bacteria</taxon>
        <taxon>Pseudomonadati</taxon>
        <taxon>Pseudomonadota</taxon>
        <taxon>Gammaproteobacteria</taxon>
        <taxon>Enterobacterales</taxon>
        <taxon>Enterobacteriaceae</taxon>
        <taxon>Escherichia</taxon>
    </lineage>
</organism>
<gene>
    <name type="primary">tnpA</name>
    <name type="ordered locus">ECOK12F010</name>
</gene>
<comment type="function">
    <text>Required for transposition of transposon Tn1000.</text>
</comment>
<comment type="similarity">
    <text evidence="1">Belongs to the transposase 7 family.</text>
</comment>
<evidence type="ECO:0000305" key="1"/>
<protein>
    <recommendedName>
        <fullName>Transposase for transposon gamma-delta</fullName>
    </recommendedName>
    <alternativeName>
        <fullName>Transposon Tn1000 transposase</fullName>
    </alternativeName>
</protein>
<keyword id="KW-0233">DNA recombination</keyword>
<keyword id="KW-0238">DNA-binding</keyword>
<keyword id="KW-0614">Plasmid</keyword>
<keyword id="KW-0814">Transposable element</keyword>
<keyword id="KW-0815">Transposition</keyword>
<geneLocation type="plasmid">
    <name>F</name>
</geneLocation>
<proteinExistence type="inferred from homology"/>